<comment type="function">
    <text evidence="5">Probably participates in a plant defense mechanism.</text>
</comment>
<comment type="domain">
    <text evidence="1">The presence of a 'disulfide through disulfide knot' structurally defines this protein as a knottin.</text>
</comment>
<comment type="PTM">
    <text evidence="5">This is a cyclic peptide.</text>
</comment>
<comment type="mass spectrometry" mass="3203.0" method="Electrospray" evidence="4"/>
<comment type="similarity">
    <text evidence="3">Belongs to the cyclotide family. Bracelet subfamily.</text>
</comment>
<dbReference type="EMBL" id="EU046620">
    <property type="protein sequence ID" value="ABW08092.1"/>
    <property type="molecule type" value="mRNA"/>
</dbReference>
<dbReference type="SMR" id="B1NRR0"/>
<dbReference type="GO" id="GO:0006952">
    <property type="term" value="P:defense response"/>
    <property type="evidence" value="ECO:0007669"/>
    <property type="project" value="UniProtKB-KW"/>
</dbReference>
<dbReference type="InterPro" id="IPR005535">
    <property type="entry name" value="Cyclotide"/>
</dbReference>
<dbReference type="InterPro" id="IPR012323">
    <property type="entry name" value="Cyclotide_bracelet_CS"/>
</dbReference>
<dbReference type="InterPro" id="IPR036146">
    <property type="entry name" value="Cyclotide_sf"/>
</dbReference>
<dbReference type="Pfam" id="PF03784">
    <property type="entry name" value="Cyclotide"/>
    <property type="match status" value="1"/>
</dbReference>
<dbReference type="SUPFAM" id="SSF57038">
    <property type="entry name" value="Cyclotides"/>
    <property type="match status" value="1"/>
</dbReference>
<dbReference type="PROSITE" id="PS51052">
    <property type="entry name" value="CYCLOTIDE"/>
    <property type="match status" value="1"/>
</dbReference>
<dbReference type="PROSITE" id="PS60008">
    <property type="entry name" value="CYCLOTIDE_BRACELET"/>
    <property type="match status" value="1"/>
</dbReference>
<organism>
    <name type="scientific">Viola biflora</name>
    <name type="common">Yellow wood violet</name>
    <dbReference type="NCBI Taxonomy" id="214529"/>
    <lineage>
        <taxon>Eukaryota</taxon>
        <taxon>Viridiplantae</taxon>
        <taxon>Streptophyta</taxon>
        <taxon>Embryophyta</taxon>
        <taxon>Tracheophyta</taxon>
        <taxon>Spermatophyta</taxon>
        <taxon>Magnoliopsida</taxon>
        <taxon>eudicotyledons</taxon>
        <taxon>Gunneridae</taxon>
        <taxon>Pentapetalae</taxon>
        <taxon>rosids</taxon>
        <taxon>fabids</taxon>
        <taxon>Malpighiales</taxon>
        <taxon>Violaceae</taxon>
        <taxon>Viola</taxon>
        <taxon>Viola subgen. Viola</taxon>
        <taxon>Viola sect. Chamaemelanium</taxon>
    </lineage>
</organism>
<protein>
    <recommendedName>
        <fullName>Cyclotide vibi-J</fullName>
    </recommendedName>
    <alternativeName>
        <fullName>Vbc3</fullName>
    </alternativeName>
</protein>
<keyword id="KW-1015">Disulfide bond</keyword>
<keyword id="KW-0960">Knottin</keyword>
<keyword id="KW-0611">Plant defense</keyword>
<keyword id="KW-0732">Signal</keyword>
<evidence type="ECO:0000250" key="1">
    <source>
        <dbReference type="UniProtKB" id="P56871"/>
    </source>
</evidence>
<evidence type="ECO:0000250" key="2">
    <source>
        <dbReference type="UniProtKB" id="P58440"/>
    </source>
</evidence>
<evidence type="ECO:0000255" key="3">
    <source>
        <dbReference type="PROSITE-ProRule" id="PRU00395"/>
    </source>
</evidence>
<evidence type="ECO:0000269" key="4">
    <source>
    </source>
</evidence>
<evidence type="ECO:0000305" key="5"/>
<evidence type="ECO:0000312" key="6">
    <source>
        <dbReference type="EMBL" id="ABW08092.1"/>
    </source>
</evidence>
<reference evidence="5 6" key="1">
    <citation type="journal article" date="2008" name="Phytochemistry">
        <title>The alpine violet, Viola biflora, is a rich source of cyclotides with potent cytotoxicity.</title>
        <authorList>
            <person name="Herrmann A."/>
            <person name="Burman R."/>
            <person name="Mylne J.S."/>
            <person name="Karlsson G."/>
            <person name="Gullbo J."/>
            <person name="Craik D.J."/>
            <person name="Clark R.J."/>
            <person name="Goeransson U."/>
        </authorList>
    </citation>
    <scope>NUCLEOTIDE SEQUENCE [MRNA]</scope>
    <scope>MASS SPECTROMETRY</scope>
    <source>
        <tissue evidence="4">Leaf</tissue>
    </source>
</reference>
<accession>B1NRR0</accession>
<proteinExistence type="evidence at protein level"/>
<name>CYVJ_VIOBI</name>
<feature type="signal peptide" evidence="2">
    <location>
        <begin position="1" status="less than"/>
        <end position="9"/>
    </location>
</feature>
<feature type="propeptide" id="PRO_0000341434" evidence="2">
    <location>
        <begin position="10"/>
        <end position="71"/>
    </location>
</feature>
<feature type="peptide" id="PRO_0000341435" description="Cyclotide vibi-J" evidence="3">
    <location>
        <begin position="72"/>
        <end position="102"/>
    </location>
</feature>
<feature type="propeptide" id="PRO_0000341436" evidence="2">
    <location>
        <begin position="103"/>
        <end position="105"/>
    </location>
</feature>
<feature type="disulfide bond" evidence="1 3">
    <location>
        <begin position="76"/>
        <end position="92"/>
    </location>
</feature>
<feature type="disulfide bond" evidence="1 3">
    <location>
        <begin position="80"/>
        <end position="94"/>
    </location>
</feature>
<feature type="disulfide bond" evidence="1 3">
    <location>
        <begin position="85"/>
        <end position="99"/>
    </location>
</feature>
<feature type="cross-link" description="Cyclopeptide (Gly-Asn)" evidence="2">
    <location>
        <begin position="72"/>
        <end position="102"/>
    </location>
</feature>
<feature type="non-terminal residue" evidence="6">
    <location>
        <position position="1"/>
    </location>
</feature>
<sequence length="105" mass="11116">AAFALPALATSFEKDFITHETVQEILKKVGSNSNGMLDEQTISALTGKTIISNPLLEEALFKSSNSINALGGTFPCGESCVWIPCISKVIGCACKSKVCYKNSLA</sequence>